<proteinExistence type="inferred from homology"/>
<protein>
    <recommendedName>
        <fullName evidence="1">Autonomous glycyl radical cofactor</fullName>
    </recommendedName>
</protein>
<organism>
    <name type="scientific">Escherichia coli O1:K1 / APEC</name>
    <dbReference type="NCBI Taxonomy" id="405955"/>
    <lineage>
        <taxon>Bacteria</taxon>
        <taxon>Pseudomonadati</taxon>
        <taxon>Pseudomonadota</taxon>
        <taxon>Gammaproteobacteria</taxon>
        <taxon>Enterobacterales</taxon>
        <taxon>Enterobacteriaceae</taxon>
        <taxon>Escherichia</taxon>
    </lineage>
</organism>
<sequence>MITGIQITKAANDDLLNSFWLLDSEKGEARCIVAKAGFAEDEVVAVSKLGDIEYREVPVEVKPEVRVEGGQHLNVNVLRRETLEDAVKHPEKYPQLTIRVSGYAVRFNSLTPEQQRDVIARTFTESL</sequence>
<evidence type="ECO:0000255" key="1">
    <source>
        <dbReference type="HAMAP-Rule" id="MF_00806"/>
    </source>
</evidence>
<accession>A1AEA9</accession>
<name>GRCA_ECOK1</name>
<feature type="chain" id="PRO_1000083718" description="Autonomous glycyl radical cofactor">
    <location>
        <begin position="1"/>
        <end position="127"/>
    </location>
</feature>
<feature type="domain" description="Glycine radical" evidence="1">
    <location>
        <begin position="5"/>
        <end position="127"/>
    </location>
</feature>
<feature type="modified residue" description="N6-acetyllysine" evidence="1">
    <location>
        <position position="48"/>
    </location>
</feature>
<feature type="modified residue" description="N6-acetyllysine" evidence="1">
    <location>
        <position position="88"/>
    </location>
</feature>
<feature type="modified residue" description="N6-acetyllysine" evidence="1">
    <location>
        <position position="92"/>
    </location>
</feature>
<feature type="modified residue" description="Glycine radical" evidence="1">
    <location>
        <position position="102"/>
    </location>
</feature>
<dbReference type="EMBL" id="CP000468">
    <property type="protein sequence ID" value="ABJ01999.1"/>
    <property type="molecule type" value="Genomic_DNA"/>
</dbReference>
<dbReference type="RefSeq" id="WP_000627804.1">
    <property type="nucleotide sequence ID" value="NZ_CADILS010000012.1"/>
</dbReference>
<dbReference type="SMR" id="A1AEA9"/>
<dbReference type="GeneID" id="89517377"/>
<dbReference type="KEGG" id="ecv:APECO1_3953"/>
<dbReference type="HOGENOM" id="CLU_133780_0_0_6"/>
<dbReference type="Proteomes" id="UP000008216">
    <property type="component" value="Chromosome"/>
</dbReference>
<dbReference type="GO" id="GO:0005829">
    <property type="term" value="C:cytosol"/>
    <property type="evidence" value="ECO:0007669"/>
    <property type="project" value="TreeGrafter"/>
</dbReference>
<dbReference type="GO" id="GO:0008861">
    <property type="term" value="F:formate C-acetyltransferase activity"/>
    <property type="evidence" value="ECO:0007669"/>
    <property type="project" value="TreeGrafter"/>
</dbReference>
<dbReference type="FunFam" id="3.20.70.20:FF:000002">
    <property type="entry name" value="Autonomous glycyl radical cofactor"/>
    <property type="match status" value="1"/>
</dbReference>
<dbReference type="Gene3D" id="3.20.70.20">
    <property type="match status" value="1"/>
</dbReference>
<dbReference type="HAMAP" id="MF_00806">
    <property type="entry name" value="GrcA"/>
    <property type="match status" value="1"/>
</dbReference>
<dbReference type="InterPro" id="IPR050244">
    <property type="entry name" value="Auton_GlycylRad_Cofactor"/>
</dbReference>
<dbReference type="InterPro" id="IPR019777">
    <property type="entry name" value="Form_AcTrfase_GR_CS"/>
</dbReference>
<dbReference type="InterPro" id="IPR001150">
    <property type="entry name" value="Gly_radical"/>
</dbReference>
<dbReference type="InterPro" id="IPR011140">
    <property type="entry name" value="Glycyl_radical_cofactor_GrcA"/>
</dbReference>
<dbReference type="NCBIfam" id="TIGR04365">
    <property type="entry name" value="spare_glycyl"/>
    <property type="match status" value="1"/>
</dbReference>
<dbReference type="PANTHER" id="PTHR30191">
    <property type="entry name" value="FORMATE ACETYLTRANSFERASE"/>
    <property type="match status" value="1"/>
</dbReference>
<dbReference type="PANTHER" id="PTHR30191:SF0">
    <property type="entry name" value="FORMATE ACETYLTRANSFERASE 1"/>
    <property type="match status" value="1"/>
</dbReference>
<dbReference type="Pfam" id="PF01228">
    <property type="entry name" value="Gly_radical"/>
    <property type="match status" value="1"/>
</dbReference>
<dbReference type="PIRSF" id="PIRSF000378">
    <property type="entry name" value="Gly_radicl_yfiD"/>
    <property type="match status" value="1"/>
</dbReference>
<dbReference type="SUPFAM" id="SSF51998">
    <property type="entry name" value="PFL-like glycyl radical enzymes"/>
    <property type="match status" value="1"/>
</dbReference>
<dbReference type="PROSITE" id="PS00850">
    <property type="entry name" value="GLY_RADICAL_1"/>
    <property type="match status" value="1"/>
</dbReference>
<dbReference type="PROSITE" id="PS51149">
    <property type="entry name" value="GLY_RADICAL_2"/>
    <property type="match status" value="1"/>
</dbReference>
<gene>
    <name evidence="1" type="primary">grcA</name>
    <name type="ordered locus">Ecok1_25050</name>
    <name type="ORF">APECO1_3953</name>
</gene>
<comment type="function">
    <text evidence="1">Acts as a radical domain for damaged PFL and possibly other radical proteins.</text>
</comment>
<reference key="1">
    <citation type="journal article" date="2007" name="J. Bacteriol.">
        <title>The genome sequence of avian pathogenic Escherichia coli strain O1:K1:H7 shares strong similarities with human extraintestinal pathogenic E. coli genomes.</title>
        <authorList>
            <person name="Johnson T.J."/>
            <person name="Kariyawasam S."/>
            <person name="Wannemuehler Y."/>
            <person name="Mangiamele P."/>
            <person name="Johnson S.J."/>
            <person name="Doetkott C."/>
            <person name="Skyberg J.A."/>
            <person name="Lynne A.M."/>
            <person name="Johnson J.R."/>
            <person name="Nolan L.K."/>
        </authorList>
    </citation>
    <scope>NUCLEOTIDE SEQUENCE [LARGE SCALE GENOMIC DNA]</scope>
</reference>
<keyword id="KW-0007">Acetylation</keyword>
<keyword id="KW-0556">Organic radical</keyword>
<keyword id="KW-1185">Reference proteome</keyword>